<protein>
    <recommendedName>
        <fullName evidence="1">Sulfurtransferase TusD</fullName>
        <ecNumber evidence="1">2.8.1.-</ecNumber>
    </recommendedName>
    <alternativeName>
        <fullName evidence="1">tRNA 2-thiouridine synthesizing protein D</fullName>
    </alternativeName>
</protein>
<name>TUSD_ECO27</name>
<organism>
    <name type="scientific">Escherichia coli O127:H6 (strain E2348/69 / EPEC)</name>
    <dbReference type="NCBI Taxonomy" id="574521"/>
    <lineage>
        <taxon>Bacteria</taxon>
        <taxon>Pseudomonadati</taxon>
        <taxon>Pseudomonadota</taxon>
        <taxon>Gammaproteobacteria</taxon>
        <taxon>Enterobacterales</taxon>
        <taxon>Enterobacteriaceae</taxon>
        <taxon>Escherichia</taxon>
    </lineage>
</organism>
<proteinExistence type="inferred from homology"/>
<gene>
    <name evidence="1" type="primary">tusD</name>
    <name type="ordered locus">E2348C_3594</name>
</gene>
<feature type="chain" id="PRO_1000134414" description="Sulfurtransferase TusD">
    <location>
        <begin position="1"/>
        <end position="128"/>
    </location>
</feature>
<feature type="active site" description="Cysteine persulfide intermediate" evidence="1">
    <location>
        <position position="78"/>
    </location>
</feature>
<reference key="1">
    <citation type="journal article" date="2009" name="J. Bacteriol.">
        <title>Complete genome sequence and comparative genome analysis of enteropathogenic Escherichia coli O127:H6 strain E2348/69.</title>
        <authorList>
            <person name="Iguchi A."/>
            <person name="Thomson N.R."/>
            <person name="Ogura Y."/>
            <person name="Saunders D."/>
            <person name="Ooka T."/>
            <person name="Henderson I.R."/>
            <person name="Harris D."/>
            <person name="Asadulghani M."/>
            <person name="Kurokawa K."/>
            <person name="Dean P."/>
            <person name="Kenny B."/>
            <person name="Quail M.A."/>
            <person name="Thurston S."/>
            <person name="Dougan G."/>
            <person name="Hayashi T."/>
            <person name="Parkhill J."/>
            <person name="Frankel G."/>
        </authorList>
    </citation>
    <scope>NUCLEOTIDE SEQUENCE [LARGE SCALE GENOMIC DNA]</scope>
    <source>
        <strain>E2348/69 / EPEC</strain>
    </source>
</reference>
<comment type="function">
    <text evidence="1">Part of a sulfur-relay system required for 2-thiolation of 5-methylaminomethyl-2-thiouridine (mnm(5)s(2)U) at tRNA wobble positions. Accepts sulfur from TusA and transfers it in turn to TusE.</text>
</comment>
<comment type="subunit">
    <text evidence="1">Heterohexamer, formed by a dimer of trimers. The hexameric TusBCD complex contains 2 copies each of TusB, TusC and TusD. The TusBCD complex interacts with TusE.</text>
</comment>
<comment type="subcellular location">
    <subcellularLocation>
        <location evidence="1">Cytoplasm</location>
    </subcellularLocation>
</comment>
<comment type="similarity">
    <text evidence="1">Belongs to the DsrE/TusD family.</text>
</comment>
<dbReference type="EC" id="2.8.1.-" evidence="1"/>
<dbReference type="EMBL" id="FM180568">
    <property type="protein sequence ID" value="CAS11142.1"/>
    <property type="molecule type" value="Genomic_DNA"/>
</dbReference>
<dbReference type="RefSeq" id="WP_001209693.1">
    <property type="nucleotide sequence ID" value="NC_011601.1"/>
</dbReference>
<dbReference type="SMR" id="B7UK55"/>
<dbReference type="KEGG" id="ecg:E2348C_3594"/>
<dbReference type="HOGENOM" id="CLU_132095_0_0_6"/>
<dbReference type="Proteomes" id="UP000008205">
    <property type="component" value="Chromosome"/>
</dbReference>
<dbReference type="GO" id="GO:1990228">
    <property type="term" value="C:sulfurtransferase complex"/>
    <property type="evidence" value="ECO:0007669"/>
    <property type="project" value="TreeGrafter"/>
</dbReference>
<dbReference type="GO" id="GO:0097163">
    <property type="term" value="F:sulfur carrier activity"/>
    <property type="evidence" value="ECO:0007669"/>
    <property type="project" value="TreeGrafter"/>
</dbReference>
<dbReference type="GO" id="GO:0016783">
    <property type="term" value="F:sulfurtransferase activity"/>
    <property type="evidence" value="ECO:0007669"/>
    <property type="project" value="UniProtKB-UniRule"/>
</dbReference>
<dbReference type="GO" id="GO:0002143">
    <property type="term" value="P:tRNA wobble position uridine thiolation"/>
    <property type="evidence" value="ECO:0007669"/>
    <property type="project" value="TreeGrafter"/>
</dbReference>
<dbReference type="FunFam" id="3.40.1260.10:FF:000001">
    <property type="entry name" value="Sulfurtransferase TusD"/>
    <property type="match status" value="1"/>
</dbReference>
<dbReference type="Gene3D" id="3.40.1260.10">
    <property type="entry name" value="DsrEFH-like"/>
    <property type="match status" value="1"/>
</dbReference>
<dbReference type="HAMAP" id="MF_00390">
    <property type="entry name" value="Thiourid_synth_D"/>
    <property type="match status" value="1"/>
</dbReference>
<dbReference type="InterPro" id="IPR027396">
    <property type="entry name" value="DsrEFH-like"/>
</dbReference>
<dbReference type="InterPro" id="IPR003787">
    <property type="entry name" value="Sulphur_relay_DsrE/F-like"/>
</dbReference>
<dbReference type="InterPro" id="IPR017463">
    <property type="entry name" value="Sulphur_relay_TusD/DsrE"/>
</dbReference>
<dbReference type="NCBIfam" id="NF001237">
    <property type="entry name" value="PRK00207.1"/>
    <property type="match status" value="1"/>
</dbReference>
<dbReference type="NCBIfam" id="TIGR03012">
    <property type="entry name" value="sulf_tusD_dsrE"/>
    <property type="match status" value="1"/>
</dbReference>
<dbReference type="PANTHER" id="PTHR34874">
    <property type="entry name" value="PROTEIN YCHN"/>
    <property type="match status" value="1"/>
</dbReference>
<dbReference type="PANTHER" id="PTHR34874:SF3">
    <property type="entry name" value="SULFURTRANSFERASE TUSD"/>
    <property type="match status" value="1"/>
</dbReference>
<dbReference type="Pfam" id="PF02635">
    <property type="entry name" value="DsrE"/>
    <property type="match status" value="1"/>
</dbReference>
<dbReference type="SUPFAM" id="SSF75169">
    <property type="entry name" value="DsrEFH-like"/>
    <property type="match status" value="1"/>
</dbReference>
<keyword id="KW-0963">Cytoplasm</keyword>
<keyword id="KW-1185">Reference proteome</keyword>
<keyword id="KW-0808">Transferase</keyword>
<keyword id="KW-0819">tRNA processing</keyword>
<evidence type="ECO:0000255" key="1">
    <source>
        <dbReference type="HAMAP-Rule" id="MF_00390"/>
    </source>
</evidence>
<accession>B7UK55</accession>
<sequence length="128" mass="13610">MRFAIVVTGPAYGTQQASSAFQFAQALIAEGHELSSVFFYREGVYNANQLTSPASDEFDLVRGWQQLNAQHGVALNICVAAALRRGVVDETEAGRLGLASSNLQPGFTLSGLGALAEASLTCDRVVQF</sequence>